<dbReference type="EC" id="6.1.1.10" evidence="1"/>
<dbReference type="EMBL" id="BA000031">
    <property type="protein sequence ID" value="BAC60332.1"/>
    <property type="status" value="ALT_INIT"/>
    <property type="molecule type" value="Genomic_DNA"/>
</dbReference>
<dbReference type="RefSeq" id="NP_798448.2">
    <property type="nucleotide sequence ID" value="NC_004603.1"/>
</dbReference>
<dbReference type="RefSeq" id="WP_005482411.1">
    <property type="nucleotide sequence ID" value="NC_004603.1"/>
</dbReference>
<dbReference type="SMR" id="Q87N07"/>
<dbReference type="GeneID" id="1189580"/>
<dbReference type="KEGG" id="vpa:VP2069"/>
<dbReference type="PATRIC" id="fig|223926.6.peg.1979"/>
<dbReference type="eggNOG" id="COG0073">
    <property type="taxonomic scope" value="Bacteria"/>
</dbReference>
<dbReference type="eggNOG" id="COG0143">
    <property type="taxonomic scope" value="Bacteria"/>
</dbReference>
<dbReference type="HOGENOM" id="CLU_009710_7_0_6"/>
<dbReference type="Proteomes" id="UP000002493">
    <property type="component" value="Chromosome 1"/>
</dbReference>
<dbReference type="GO" id="GO:0005829">
    <property type="term" value="C:cytosol"/>
    <property type="evidence" value="ECO:0007669"/>
    <property type="project" value="TreeGrafter"/>
</dbReference>
<dbReference type="GO" id="GO:0005524">
    <property type="term" value="F:ATP binding"/>
    <property type="evidence" value="ECO:0007669"/>
    <property type="project" value="UniProtKB-UniRule"/>
</dbReference>
<dbReference type="GO" id="GO:0046872">
    <property type="term" value="F:metal ion binding"/>
    <property type="evidence" value="ECO:0007669"/>
    <property type="project" value="UniProtKB-KW"/>
</dbReference>
<dbReference type="GO" id="GO:0004825">
    <property type="term" value="F:methionine-tRNA ligase activity"/>
    <property type="evidence" value="ECO:0007669"/>
    <property type="project" value="UniProtKB-UniRule"/>
</dbReference>
<dbReference type="GO" id="GO:0000049">
    <property type="term" value="F:tRNA binding"/>
    <property type="evidence" value="ECO:0007669"/>
    <property type="project" value="UniProtKB-KW"/>
</dbReference>
<dbReference type="GO" id="GO:0006431">
    <property type="term" value="P:methionyl-tRNA aminoacylation"/>
    <property type="evidence" value="ECO:0007669"/>
    <property type="project" value="UniProtKB-UniRule"/>
</dbReference>
<dbReference type="CDD" id="cd07957">
    <property type="entry name" value="Anticodon_Ia_Met"/>
    <property type="match status" value="1"/>
</dbReference>
<dbReference type="CDD" id="cd00814">
    <property type="entry name" value="MetRS_core"/>
    <property type="match status" value="1"/>
</dbReference>
<dbReference type="CDD" id="cd02800">
    <property type="entry name" value="tRNA_bind_EcMetRS_like"/>
    <property type="match status" value="1"/>
</dbReference>
<dbReference type="FunFam" id="1.10.730.10:FF:000005">
    <property type="entry name" value="Methionine--tRNA ligase"/>
    <property type="match status" value="1"/>
</dbReference>
<dbReference type="FunFam" id="2.20.28.20:FF:000001">
    <property type="entry name" value="Methionine--tRNA ligase"/>
    <property type="match status" value="1"/>
</dbReference>
<dbReference type="FunFam" id="2.40.50.140:FF:000042">
    <property type="entry name" value="Methionine--tRNA ligase"/>
    <property type="match status" value="1"/>
</dbReference>
<dbReference type="Gene3D" id="3.40.50.620">
    <property type="entry name" value="HUPs"/>
    <property type="match status" value="1"/>
</dbReference>
<dbReference type="Gene3D" id="1.10.730.10">
    <property type="entry name" value="Isoleucyl-tRNA Synthetase, Domain 1"/>
    <property type="match status" value="1"/>
</dbReference>
<dbReference type="Gene3D" id="2.20.28.20">
    <property type="entry name" value="Methionyl-tRNA synthetase, Zn-domain"/>
    <property type="match status" value="1"/>
</dbReference>
<dbReference type="Gene3D" id="2.40.50.140">
    <property type="entry name" value="Nucleic acid-binding proteins"/>
    <property type="match status" value="1"/>
</dbReference>
<dbReference type="HAMAP" id="MF_00098">
    <property type="entry name" value="Met_tRNA_synth_type1"/>
    <property type="match status" value="1"/>
</dbReference>
<dbReference type="InterPro" id="IPR001412">
    <property type="entry name" value="aa-tRNA-synth_I_CS"/>
</dbReference>
<dbReference type="InterPro" id="IPR041872">
    <property type="entry name" value="Anticodon_Met"/>
</dbReference>
<dbReference type="InterPro" id="IPR004495">
    <property type="entry name" value="Met-tRNA-synth_bsu_C"/>
</dbReference>
<dbReference type="InterPro" id="IPR023458">
    <property type="entry name" value="Met-tRNA_ligase_1"/>
</dbReference>
<dbReference type="InterPro" id="IPR014758">
    <property type="entry name" value="Met-tRNA_synth"/>
</dbReference>
<dbReference type="InterPro" id="IPR015413">
    <property type="entry name" value="Methionyl/Leucyl_tRNA_Synth"/>
</dbReference>
<dbReference type="InterPro" id="IPR033911">
    <property type="entry name" value="MetRS_core"/>
</dbReference>
<dbReference type="InterPro" id="IPR029038">
    <property type="entry name" value="MetRS_Zn"/>
</dbReference>
<dbReference type="InterPro" id="IPR012340">
    <property type="entry name" value="NA-bd_OB-fold"/>
</dbReference>
<dbReference type="InterPro" id="IPR014729">
    <property type="entry name" value="Rossmann-like_a/b/a_fold"/>
</dbReference>
<dbReference type="InterPro" id="IPR002547">
    <property type="entry name" value="tRNA-bd_dom"/>
</dbReference>
<dbReference type="InterPro" id="IPR009080">
    <property type="entry name" value="tRNAsynth_Ia_anticodon-bd"/>
</dbReference>
<dbReference type="NCBIfam" id="TIGR00398">
    <property type="entry name" value="metG"/>
    <property type="match status" value="1"/>
</dbReference>
<dbReference type="NCBIfam" id="TIGR00399">
    <property type="entry name" value="metG_C_term"/>
    <property type="match status" value="1"/>
</dbReference>
<dbReference type="NCBIfam" id="NF001100">
    <property type="entry name" value="PRK00133.1"/>
    <property type="match status" value="1"/>
</dbReference>
<dbReference type="PANTHER" id="PTHR45765">
    <property type="entry name" value="METHIONINE--TRNA LIGASE"/>
    <property type="match status" value="1"/>
</dbReference>
<dbReference type="PANTHER" id="PTHR45765:SF1">
    <property type="entry name" value="METHIONINE--TRNA LIGASE, CYTOPLASMIC"/>
    <property type="match status" value="1"/>
</dbReference>
<dbReference type="Pfam" id="PF19303">
    <property type="entry name" value="Anticodon_3"/>
    <property type="match status" value="1"/>
</dbReference>
<dbReference type="Pfam" id="PF09334">
    <property type="entry name" value="tRNA-synt_1g"/>
    <property type="match status" value="1"/>
</dbReference>
<dbReference type="Pfam" id="PF01588">
    <property type="entry name" value="tRNA_bind"/>
    <property type="match status" value="1"/>
</dbReference>
<dbReference type="PRINTS" id="PR01041">
    <property type="entry name" value="TRNASYNTHMET"/>
</dbReference>
<dbReference type="SUPFAM" id="SSF47323">
    <property type="entry name" value="Anticodon-binding domain of a subclass of class I aminoacyl-tRNA synthetases"/>
    <property type="match status" value="1"/>
</dbReference>
<dbReference type="SUPFAM" id="SSF57770">
    <property type="entry name" value="Methionyl-tRNA synthetase (MetRS), Zn-domain"/>
    <property type="match status" value="1"/>
</dbReference>
<dbReference type="SUPFAM" id="SSF50249">
    <property type="entry name" value="Nucleic acid-binding proteins"/>
    <property type="match status" value="1"/>
</dbReference>
<dbReference type="SUPFAM" id="SSF52374">
    <property type="entry name" value="Nucleotidylyl transferase"/>
    <property type="match status" value="1"/>
</dbReference>
<dbReference type="PROSITE" id="PS00178">
    <property type="entry name" value="AA_TRNA_LIGASE_I"/>
    <property type="match status" value="1"/>
</dbReference>
<dbReference type="PROSITE" id="PS50886">
    <property type="entry name" value="TRBD"/>
    <property type="match status" value="1"/>
</dbReference>
<reference key="1">
    <citation type="journal article" date="2003" name="Lancet">
        <title>Genome sequence of Vibrio parahaemolyticus: a pathogenic mechanism distinct from that of V. cholerae.</title>
        <authorList>
            <person name="Makino K."/>
            <person name="Oshima K."/>
            <person name="Kurokawa K."/>
            <person name="Yokoyama K."/>
            <person name="Uda T."/>
            <person name="Tagomori K."/>
            <person name="Iijima Y."/>
            <person name="Najima M."/>
            <person name="Nakano M."/>
            <person name="Yamashita A."/>
            <person name="Kubota Y."/>
            <person name="Kimura S."/>
            <person name="Yasunaga T."/>
            <person name="Honda T."/>
            <person name="Shinagawa H."/>
            <person name="Hattori M."/>
            <person name="Iida T."/>
        </authorList>
    </citation>
    <scope>NUCLEOTIDE SEQUENCE [LARGE SCALE GENOMIC DNA]</scope>
    <source>
        <strain>RIMD 2210633</strain>
    </source>
</reference>
<organism>
    <name type="scientific">Vibrio parahaemolyticus serotype O3:K6 (strain RIMD 2210633)</name>
    <dbReference type="NCBI Taxonomy" id="223926"/>
    <lineage>
        <taxon>Bacteria</taxon>
        <taxon>Pseudomonadati</taxon>
        <taxon>Pseudomonadota</taxon>
        <taxon>Gammaproteobacteria</taxon>
        <taxon>Vibrionales</taxon>
        <taxon>Vibrionaceae</taxon>
        <taxon>Vibrio</taxon>
    </lineage>
</organism>
<keyword id="KW-0030">Aminoacyl-tRNA synthetase</keyword>
<keyword id="KW-0067">ATP-binding</keyword>
<keyword id="KW-0963">Cytoplasm</keyword>
<keyword id="KW-0436">Ligase</keyword>
<keyword id="KW-0479">Metal-binding</keyword>
<keyword id="KW-0547">Nucleotide-binding</keyword>
<keyword id="KW-0648">Protein biosynthesis</keyword>
<keyword id="KW-0694">RNA-binding</keyword>
<keyword id="KW-0820">tRNA-binding</keyword>
<keyword id="KW-0862">Zinc</keyword>
<name>SYM_VIBPA</name>
<gene>
    <name evidence="1" type="primary">metG</name>
    <name type="ordered locus">VP2069</name>
</gene>
<comment type="function">
    <text evidence="1">Is required not only for elongation of protein synthesis but also for the initiation of all mRNA translation through initiator tRNA(fMet) aminoacylation.</text>
</comment>
<comment type="catalytic activity">
    <reaction evidence="1">
        <text>tRNA(Met) + L-methionine + ATP = L-methionyl-tRNA(Met) + AMP + diphosphate</text>
        <dbReference type="Rhea" id="RHEA:13481"/>
        <dbReference type="Rhea" id="RHEA-COMP:9667"/>
        <dbReference type="Rhea" id="RHEA-COMP:9698"/>
        <dbReference type="ChEBI" id="CHEBI:30616"/>
        <dbReference type="ChEBI" id="CHEBI:33019"/>
        <dbReference type="ChEBI" id="CHEBI:57844"/>
        <dbReference type="ChEBI" id="CHEBI:78442"/>
        <dbReference type="ChEBI" id="CHEBI:78530"/>
        <dbReference type="ChEBI" id="CHEBI:456215"/>
        <dbReference type="EC" id="6.1.1.10"/>
    </reaction>
</comment>
<comment type="cofactor">
    <cofactor evidence="1">
        <name>Zn(2+)</name>
        <dbReference type="ChEBI" id="CHEBI:29105"/>
    </cofactor>
    <text evidence="1">Binds 1 zinc ion per subunit.</text>
</comment>
<comment type="subunit">
    <text evidence="1">Homodimer.</text>
</comment>
<comment type="subcellular location">
    <subcellularLocation>
        <location evidence="1">Cytoplasm</location>
    </subcellularLocation>
</comment>
<comment type="similarity">
    <text evidence="1">Belongs to the class-I aminoacyl-tRNA synthetase family. MetG type 1 subfamily.</text>
</comment>
<comment type="sequence caution" evidence="2">
    <conflict type="erroneous initiation">
        <sequence resource="EMBL-CDS" id="BAC60332"/>
    </conflict>
</comment>
<protein>
    <recommendedName>
        <fullName evidence="1">Methionine--tRNA ligase</fullName>
        <ecNumber evidence="1">6.1.1.10</ecNumber>
    </recommendedName>
    <alternativeName>
        <fullName evidence="1">Methionyl-tRNA synthetase</fullName>
        <shortName evidence="1">MetRS</shortName>
    </alternativeName>
</protein>
<feature type="chain" id="PRO_0000139171" description="Methionine--tRNA ligase">
    <location>
        <begin position="1"/>
        <end position="688"/>
    </location>
</feature>
<feature type="domain" description="tRNA-binding" evidence="1">
    <location>
        <begin position="587"/>
        <end position="688"/>
    </location>
</feature>
<feature type="short sequence motif" description="'HIGH' region">
    <location>
        <begin position="20"/>
        <end position="30"/>
    </location>
</feature>
<feature type="short sequence motif" description="'KMSKS' region">
    <location>
        <begin position="337"/>
        <end position="341"/>
    </location>
</feature>
<feature type="binding site" evidence="1">
    <location>
        <position position="151"/>
    </location>
    <ligand>
        <name>Zn(2+)</name>
        <dbReference type="ChEBI" id="CHEBI:29105"/>
    </ligand>
</feature>
<feature type="binding site" evidence="1">
    <location>
        <position position="154"/>
    </location>
    <ligand>
        <name>Zn(2+)</name>
        <dbReference type="ChEBI" id="CHEBI:29105"/>
    </ligand>
</feature>
<feature type="binding site" evidence="1">
    <location>
        <position position="164"/>
    </location>
    <ligand>
        <name>Zn(2+)</name>
        <dbReference type="ChEBI" id="CHEBI:29105"/>
    </ligand>
</feature>
<feature type="binding site" evidence="1">
    <location>
        <position position="167"/>
    </location>
    <ligand>
        <name>Zn(2+)</name>
        <dbReference type="ChEBI" id="CHEBI:29105"/>
    </ligand>
</feature>
<feature type="binding site" evidence="1">
    <location>
        <position position="340"/>
    </location>
    <ligand>
        <name>ATP</name>
        <dbReference type="ChEBI" id="CHEBI:30616"/>
    </ligand>
</feature>
<sequence length="688" mass="77995">MANDPRHLPSRKLLVTCALPYANGSIHLGHMLEHIQADIWVRYQRLRGNTVNFICADDAHGTPIMLKAQQMGITPEEMIAAVSEEHQKDFAGFDISFDNYHSTHSEENRELASHIYLELKKNGFISSRTISQLFDPEKEMFLPDRFVKGTCPKCKSEDQYGDNCDNCGETYSPTELINPKSAVSGATPVMKDSEHFFFDLPQFESMLKEWTRSGSLQSETANKMQEWFESGLQQWDISRDAPYFGFEIPGEKDKFFYVWLDAPIGYMGSFKNLCNKRDDLDFDEYWNKDSKTELYHFIGKDIVYFHSLFWPAMLEGSGFRKPNNVFVHGYVTVNGAKMSKSKGTFVKASTYLDHLDPECLRYYYAAKLNSRIDDLDLNLEDFTQRVNADVVNKIVNLASRNAGFIAKRFEGKLSDNFAEPELYNEFVAAADRIAELFEAREFGRAIREITALADKANQYVDEKAPWVVAKEEGKDQELQEICSVGINLFRVLMTYLKPVMPALAARTEAFLNQELTWEGIAQPLTGHEITKFKALFNRIDPKNIEAMIEASKEDAAAEMAAKEKAEAAKTETELSKDPIADEIEFDTFAQVDLRIARIISCEEVPKANKLLKFQLDIGGETRQVFSGIKSAYKPEELEGKLTVMVANLKPRKMKFGMSEGMILAAGPGGSDLWILEPHEGAQPGMRVM</sequence>
<proteinExistence type="inferred from homology"/>
<accession>Q87N07</accession>
<evidence type="ECO:0000255" key="1">
    <source>
        <dbReference type="HAMAP-Rule" id="MF_00098"/>
    </source>
</evidence>
<evidence type="ECO:0000305" key="2"/>